<dbReference type="EC" id="5.4.2.10" evidence="1"/>
<dbReference type="EMBL" id="CP000970">
    <property type="protein sequence ID" value="ACB20058.1"/>
    <property type="molecule type" value="Genomic_DNA"/>
</dbReference>
<dbReference type="RefSeq" id="WP_000071137.1">
    <property type="nucleotide sequence ID" value="NC_010498.1"/>
</dbReference>
<dbReference type="SMR" id="B1LFS6"/>
<dbReference type="GeneID" id="93778805"/>
<dbReference type="KEGG" id="ecm:EcSMS35_3472"/>
<dbReference type="HOGENOM" id="CLU_016950_7_0_6"/>
<dbReference type="Proteomes" id="UP000007011">
    <property type="component" value="Chromosome"/>
</dbReference>
<dbReference type="GO" id="GO:0005829">
    <property type="term" value="C:cytosol"/>
    <property type="evidence" value="ECO:0007669"/>
    <property type="project" value="TreeGrafter"/>
</dbReference>
<dbReference type="GO" id="GO:0000287">
    <property type="term" value="F:magnesium ion binding"/>
    <property type="evidence" value="ECO:0007669"/>
    <property type="project" value="UniProtKB-UniRule"/>
</dbReference>
<dbReference type="GO" id="GO:0008966">
    <property type="term" value="F:phosphoglucosamine mutase activity"/>
    <property type="evidence" value="ECO:0007669"/>
    <property type="project" value="UniProtKB-UniRule"/>
</dbReference>
<dbReference type="GO" id="GO:0004615">
    <property type="term" value="F:phosphomannomutase activity"/>
    <property type="evidence" value="ECO:0007669"/>
    <property type="project" value="TreeGrafter"/>
</dbReference>
<dbReference type="GO" id="GO:0005975">
    <property type="term" value="P:carbohydrate metabolic process"/>
    <property type="evidence" value="ECO:0007669"/>
    <property type="project" value="InterPro"/>
</dbReference>
<dbReference type="GO" id="GO:0009252">
    <property type="term" value="P:peptidoglycan biosynthetic process"/>
    <property type="evidence" value="ECO:0007669"/>
    <property type="project" value="TreeGrafter"/>
</dbReference>
<dbReference type="GO" id="GO:0006048">
    <property type="term" value="P:UDP-N-acetylglucosamine biosynthetic process"/>
    <property type="evidence" value="ECO:0007669"/>
    <property type="project" value="TreeGrafter"/>
</dbReference>
<dbReference type="CDD" id="cd05802">
    <property type="entry name" value="GlmM"/>
    <property type="match status" value="1"/>
</dbReference>
<dbReference type="FunFam" id="3.30.310.50:FF:000001">
    <property type="entry name" value="Phosphoglucosamine mutase"/>
    <property type="match status" value="1"/>
</dbReference>
<dbReference type="FunFam" id="3.40.120.10:FF:000001">
    <property type="entry name" value="Phosphoglucosamine mutase"/>
    <property type="match status" value="1"/>
</dbReference>
<dbReference type="FunFam" id="3.40.120.10:FF:000002">
    <property type="entry name" value="Phosphoglucosamine mutase"/>
    <property type="match status" value="1"/>
</dbReference>
<dbReference type="Gene3D" id="3.40.120.10">
    <property type="entry name" value="Alpha-D-Glucose-1,6-Bisphosphate, subunit A, domain 3"/>
    <property type="match status" value="3"/>
</dbReference>
<dbReference type="Gene3D" id="3.30.310.50">
    <property type="entry name" value="Alpha-D-phosphohexomutase, C-terminal domain"/>
    <property type="match status" value="1"/>
</dbReference>
<dbReference type="HAMAP" id="MF_01554_B">
    <property type="entry name" value="GlmM_B"/>
    <property type="match status" value="1"/>
</dbReference>
<dbReference type="InterPro" id="IPR005844">
    <property type="entry name" value="A-D-PHexomutase_a/b/a-I"/>
</dbReference>
<dbReference type="InterPro" id="IPR016055">
    <property type="entry name" value="A-D-PHexomutase_a/b/a-I/II/III"/>
</dbReference>
<dbReference type="InterPro" id="IPR005845">
    <property type="entry name" value="A-D-PHexomutase_a/b/a-II"/>
</dbReference>
<dbReference type="InterPro" id="IPR005846">
    <property type="entry name" value="A-D-PHexomutase_a/b/a-III"/>
</dbReference>
<dbReference type="InterPro" id="IPR005843">
    <property type="entry name" value="A-D-PHexomutase_C"/>
</dbReference>
<dbReference type="InterPro" id="IPR036900">
    <property type="entry name" value="A-D-PHexomutase_C_sf"/>
</dbReference>
<dbReference type="InterPro" id="IPR016066">
    <property type="entry name" value="A-D-PHexomutase_CS"/>
</dbReference>
<dbReference type="InterPro" id="IPR005841">
    <property type="entry name" value="Alpha-D-phosphohexomutase_SF"/>
</dbReference>
<dbReference type="InterPro" id="IPR006352">
    <property type="entry name" value="GlmM_bact"/>
</dbReference>
<dbReference type="InterPro" id="IPR050060">
    <property type="entry name" value="Phosphoglucosamine_mutase"/>
</dbReference>
<dbReference type="NCBIfam" id="TIGR01455">
    <property type="entry name" value="glmM"/>
    <property type="match status" value="1"/>
</dbReference>
<dbReference type="NCBIfam" id="NF008139">
    <property type="entry name" value="PRK10887.1"/>
    <property type="match status" value="1"/>
</dbReference>
<dbReference type="PANTHER" id="PTHR42946:SF1">
    <property type="entry name" value="PHOSPHOGLUCOMUTASE (ALPHA-D-GLUCOSE-1,6-BISPHOSPHATE-DEPENDENT)"/>
    <property type="match status" value="1"/>
</dbReference>
<dbReference type="PANTHER" id="PTHR42946">
    <property type="entry name" value="PHOSPHOHEXOSE MUTASE"/>
    <property type="match status" value="1"/>
</dbReference>
<dbReference type="Pfam" id="PF02878">
    <property type="entry name" value="PGM_PMM_I"/>
    <property type="match status" value="1"/>
</dbReference>
<dbReference type="Pfam" id="PF02879">
    <property type="entry name" value="PGM_PMM_II"/>
    <property type="match status" value="1"/>
</dbReference>
<dbReference type="Pfam" id="PF02880">
    <property type="entry name" value="PGM_PMM_III"/>
    <property type="match status" value="1"/>
</dbReference>
<dbReference type="Pfam" id="PF00408">
    <property type="entry name" value="PGM_PMM_IV"/>
    <property type="match status" value="1"/>
</dbReference>
<dbReference type="PRINTS" id="PR00509">
    <property type="entry name" value="PGMPMM"/>
</dbReference>
<dbReference type="SUPFAM" id="SSF55957">
    <property type="entry name" value="Phosphoglucomutase, C-terminal domain"/>
    <property type="match status" value="1"/>
</dbReference>
<dbReference type="SUPFAM" id="SSF53738">
    <property type="entry name" value="Phosphoglucomutase, first 3 domains"/>
    <property type="match status" value="3"/>
</dbReference>
<dbReference type="PROSITE" id="PS00710">
    <property type="entry name" value="PGM_PMM"/>
    <property type="match status" value="1"/>
</dbReference>
<organism>
    <name type="scientific">Escherichia coli (strain SMS-3-5 / SECEC)</name>
    <dbReference type="NCBI Taxonomy" id="439855"/>
    <lineage>
        <taxon>Bacteria</taxon>
        <taxon>Pseudomonadati</taxon>
        <taxon>Pseudomonadota</taxon>
        <taxon>Gammaproteobacteria</taxon>
        <taxon>Enterobacterales</taxon>
        <taxon>Enterobacteriaceae</taxon>
        <taxon>Escherichia</taxon>
    </lineage>
</organism>
<evidence type="ECO:0000255" key="1">
    <source>
        <dbReference type="HAMAP-Rule" id="MF_01554"/>
    </source>
</evidence>
<reference key="1">
    <citation type="journal article" date="2008" name="J. Bacteriol.">
        <title>Insights into the environmental resistance gene pool from the genome sequence of the multidrug-resistant environmental isolate Escherichia coli SMS-3-5.</title>
        <authorList>
            <person name="Fricke W.F."/>
            <person name="Wright M.S."/>
            <person name="Lindell A.H."/>
            <person name="Harkins D.M."/>
            <person name="Baker-Austin C."/>
            <person name="Ravel J."/>
            <person name="Stepanauskas R."/>
        </authorList>
    </citation>
    <scope>NUCLEOTIDE SEQUENCE [LARGE SCALE GENOMIC DNA]</scope>
    <source>
        <strain>SMS-3-5 / SECEC</strain>
    </source>
</reference>
<proteinExistence type="inferred from homology"/>
<accession>B1LFS6</accession>
<comment type="function">
    <text evidence="1">Catalyzes the conversion of glucosamine-6-phosphate to glucosamine-1-phosphate.</text>
</comment>
<comment type="catalytic activity">
    <reaction evidence="1">
        <text>alpha-D-glucosamine 1-phosphate = D-glucosamine 6-phosphate</text>
        <dbReference type="Rhea" id="RHEA:23424"/>
        <dbReference type="ChEBI" id="CHEBI:58516"/>
        <dbReference type="ChEBI" id="CHEBI:58725"/>
        <dbReference type="EC" id="5.4.2.10"/>
    </reaction>
</comment>
<comment type="cofactor">
    <cofactor evidence="1">
        <name>Mg(2+)</name>
        <dbReference type="ChEBI" id="CHEBI:18420"/>
    </cofactor>
    <text evidence="1">Binds 1 Mg(2+) ion per subunit.</text>
</comment>
<comment type="PTM">
    <text evidence="1">Activated by phosphorylation.</text>
</comment>
<comment type="similarity">
    <text evidence="1">Belongs to the phosphohexose mutase family.</text>
</comment>
<protein>
    <recommendedName>
        <fullName evidence="1">Phosphoglucosamine mutase</fullName>
        <ecNumber evidence="1">5.4.2.10</ecNumber>
    </recommendedName>
</protein>
<gene>
    <name evidence="1" type="primary">glmM</name>
    <name type="ordered locus">EcSMS35_3472</name>
</gene>
<keyword id="KW-0413">Isomerase</keyword>
<keyword id="KW-0460">Magnesium</keyword>
<keyword id="KW-0479">Metal-binding</keyword>
<keyword id="KW-0597">Phosphoprotein</keyword>
<name>GLMM_ECOSM</name>
<feature type="chain" id="PRO_1000201092" description="Phosphoglucosamine mutase">
    <location>
        <begin position="1"/>
        <end position="445"/>
    </location>
</feature>
<feature type="active site" description="Phosphoserine intermediate" evidence="1">
    <location>
        <position position="102"/>
    </location>
</feature>
<feature type="binding site" description="via phosphate group" evidence="1">
    <location>
        <position position="102"/>
    </location>
    <ligand>
        <name>Mg(2+)</name>
        <dbReference type="ChEBI" id="CHEBI:18420"/>
    </ligand>
</feature>
<feature type="binding site" evidence="1">
    <location>
        <position position="241"/>
    </location>
    <ligand>
        <name>Mg(2+)</name>
        <dbReference type="ChEBI" id="CHEBI:18420"/>
    </ligand>
</feature>
<feature type="binding site" evidence="1">
    <location>
        <position position="243"/>
    </location>
    <ligand>
        <name>Mg(2+)</name>
        <dbReference type="ChEBI" id="CHEBI:18420"/>
    </ligand>
</feature>
<feature type="binding site" evidence="1">
    <location>
        <position position="245"/>
    </location>
    <ligand>
        <name>Mg(2+)</name>
        <dbReference type="ChEBI" id="CHEBI:18420"/>
    </ligand>
</feature>
<feature type="modified residue" description="Phosphoserine" evidence="1">
    <location>
        <position position="102"/>
    </location>
</feature>
<sequence length="445" mass="47517">MSNRKYFGTDGIRGRVGDAPITPDFVLKLGWAAGKVLARHGSRKIIIGKDTRISGYMLESALEAGLAAAGLSALFTGPMPTPAVAYLTRTFRAEAGIVISASHNPFYDNGIKFFSIDGTKLPDAVEEAIEAEMEKEISCVDSAELGKASRIVDAAGRYIEFCKATFPNELSLSELKIVVDCANGATYHIAPNVLRELGANVIAIGCEPNGVNINAEVGATDVRALQARVLAEKADLGIAFDGDGDRVIMVDHEGNKVDGDQIMYIIAREGLRQGQLRGGAVGTLMSNMGLELALKQLGIPFARAKVGDRYVLEKMQEKGWRIGAENSGHVILLDKTTTGDGIVAGLQVLAAMARNHMSLHDLCSGMKMFPQILVNVRYTAGSGDPLEHESVKAVTAEVEAALGSRGRVLLRKSGTEPLIRVMVEGEDEAQVTEFAHRIADAVKAV</sequence>